<sequence length="1796" mass="195859">MDPTFPRVVFFSNEFPSDDLKDLFRRLHQQSKDRRFKLLSIFLEESTAILKDEVAKLPRPLKELVPPFDSVLALANVDFRQGPLGAAMESSMLTILELGMFIGHYEAEDAEWDLVPSRTVLAGLSIGILAAAAVALSSSLADVAKNGAEGVRVSFRLGVYVADISTKLESPQPDGTLSSWAHVVTETTQAGVQDELDQFNADTQSPELTKVFVSAADKTSVSVSGPPSRIKAAFQHSPALRYSKSLPLPVYDGLCHASHLYTQNDIDAVINSAESVIQPNRSVRLALLSSQTGKPFAARTARELFLEIGTELLTGTIYLDNVTAGIVEHFQLDSETSGKCQIDSFRTSLVLRGIYSTVEAKFTKEQQQLIRRDLVCWVHKDFGPRRPHSHASSKLAIVGMACRLPGGANDLDLFWKLLEEGRDTHTTVPPDRFDLNTHYDPTGKTENATQTPFGNFIDRPGYFDAGFFNMSPREAEQTDPMQRLALVTAYEAMEMAGVVPGRTPSTHPSRIGTFYGQASDDWRELNASQNISTYAVPGGERAFANGRINYFFKFSGPSFNLDTACSSGLAAVQAACSALWAGEADTVIAGGLNVITDPDNYCGLGNAHFLSKTGQCKVWDKDADGYCRADGIGSVVIKRLEDAEADNDNILAVVLGARTNHSAEAISITHPHAGAQRANYRQVLHQAGVNPVDVSYIELHGTGTQAGDAVESESVSDVFAPVTPRRRPDQRLYLGAVKSNIGHGEAAAGIASLLKALLVYQKNMIPMHIGIKSEINPTIPKDLERRNVGLAMENTPWPRPAGKKRLAVVNSFGAHGGNTTLLLEDAPERVKAQSTEDRITHPVLISAKSKKSLQANMESLLSYLDQHPETSLADLAYTTSSRRMHHSMRFGTAVSCIPALQKALRSQLCNPNFASEMRPIPNEAPSVVLAFTGQGAYYSGMGRELFIEFPYFRAQVQQLDRLAQRLGFPSVVPVIDGSIEDSPASPILTQLSVVILEIALARFWSLLGVSISAVIGHSLGEYAALAVAGVISAADALYLVGRRAQLVEERCTPGSHSMLSVRASEDAIQEMLASEPETAAIAYEVSCCNTYQDTVIGGLKDEINNIRMALEAKSIKCTLLDVPYAFHTAQMDSILDGLEALAMPVPFKAPSIPVLSPLLATAVFDVKSFNANYLRRATRETVDFAAAIEAAQDMGLVDTKTIWVDVGPHPICAGLVRGMIPSASVVSSCRRNEDSIATISKSLVTLHLAGLTPFWAEFFRPRECEYSLLHLPKYRWNETDYWIPYIGTWTLDKAHLKHGTKPTPFSLSMSRPSALRTSLVHQITAETVEATTATLHTISDMQHPDFLEAIHGHTMNKCGVATSSIWSDMAFTVGEYLYRRLVPNVKDVHMNLADVEVLHAQVAGKTKGSVQPLVLQAHLDLSTNSMSLAWFNADGETGECAAESFATATVRFEDPVAWKKEWARLTHLVRGRIEALEQRAAEGKASRLSKPLAYALFKNVVDYADRYRGMDSVVLDELEAMAEVTLVPERHGTWHTPPHWIDSVSHLAGLVMNGSDASNTRDYFFVTPGCDSFRLLNKLEPGVRYRSYVRMFPLPEDPNMHGGDVYILQGEEIVGMVGMIRFRRVPRLLMDRFFSPPTTTSVAGPAPPVAAATAKGHNVIPTTPAVPTPAPAIATSNPIVNSAIAYKTPESTPPLAPSSESSTPKESPIATPPESERADPMDNMVSQCLRLMARETGLEVEALTGDASFVQLGVDSLMSLVLSEKFRAELGVEIKSSLFLECPTIGEMTAWIEEYC</sequence>
<dbReference type="EC" id="2.3.1.-" evidence="12"/>
<dbReference type="EMBL" id="DS995703">
    <property type="protein sequence ID" value="EEQ30779.1"/>
    <property type="molecule type" value="Genomic_DNA"/>
</dbReference>
<dbReference type="RefSeq" id="XP_002848092.1">
    <property type="nucleotide sequence ID" value="XM_002848046.1"/>
</dbReference>
<dbReference type="SMR" id="C5FM57"/>
<dbReference type="STRING" id="554155.C5FM57"/>
<dbReference type="GeneID" id="9229414"/>
<dbReference type="VEuPathDB" id="FungiDB:MCYG_03598"/>
<dbReference type="eggNOG" id="KOG1202">
    <property type="taxonomic scope" value="Eukaryota"/>
</dbReference>
<dbReference type="HOGENOM" id="CLU_000022_6_1_1"/>
<dbReference type="OMA" id="LNTHYDP"/>
<dbReference type="OrthoDB" id="329835at2759"/>
<dbReference type="Proteomes" id="UP000002035">
    <property type="component" value="Unassembled WGS sequence"/>
</dbReference>
<dbReference type="GO" id="GO:0004315">
    <property type="term" value="F:3-oxoacyl-[acyl-carrier-protein] synthase activity"/>
    <property type="evidence" value="ECO:0007669"/>
    <property type="project" value="InterPro"/>
</dbReference>
<dbReference type="GO" id="GO:0004312">
    <property type="term" value="F:fatty acid synthase activity"/>
    <property type="evidence" value="ECO:0007669"/>
    <property type="project" value="TreeGrafter"/>
</dbReference>
<dbReference type="GO" id="GO:0031177">
    <property type="term" value="F:phosphopantetheine binding"/>
    <property type="evidence" value="ECO:0007669"/>
    <property type="project" value="InterPro"/>
</dbReference>
<dbReference type="GO" id="GO:0006633">
    <property type="term" value="P:fatty acid biosynthetic process"/>
    <property type="evidence" value="ECO:0007669"/>
    <property type="project" value="InterPro"/>
</dbReference>
<dbReference type="GO" id="GO:0044550">
    <property type="term" value="P:secondary metabolite biosynthetic process"/>
    <property type="evidence" value="ECO:0007669"/>
    <property type="project" value="TreeGrafter"/>
</dbReference>
<dbReference type="CDD" id="cd00833">
    <property type="entry name" value="PKS"/>
    <property type="match status" value="1"/>
</dbReference>
<dbReference type="FunFam" id="3.40.366.10:FF:000017">
    <property type="entry name" value="Non-reducing polyketide synthase aptA"/>
    <property type="match status" value="1"/>
</dbReference>
<dbReference type="FunFam" id="3.40.366.10:FF:000002">
    <property type="entry name" value="Probable polyketide synthase 2"/>
    <property type="match status" value="1"/>
</dbReference>
<dbReference type="FunFam" id="1.10.1200.10:FF:000011">
    <property type="entry name" value="Sterigmatocystin biosynthesis polyketide synthase"/>
    <property type="match status" value="1"/>
</dbReference>
<dbReference type="FunFam" id="3.10.129.110:FF:000001">
    <property type="entry name" value="Sterigmatocystin biosynthesis polyketide synthase"/>
    <property type="match status" value="1"/>
</dbReference>
<dbReference type="FunFam" id="3.40.47.10:FF:000031">
    <property type="entry name" value="Sterigmatocystin biosynthesis polyketide synthase"/>
    <property type="match status" value="1"/>
</dbReference>
<dbReference type="Gene3D" id="3.30.70.3290">
    <property type="match status" value="1"/>
</dbReference>
<dbReference type="Gene3D" id="3.40.47.10">
    <property type="match status" value="1"/>
</dbReference>
<dbReference type="Gene3D" id="1.10.1200.10">
    <property type="entry name" value="ACP-like"/>
    <property type="match status" value="1"/>
</dbReference>
<dbReference type="Gene3D" id="3.40.366.10">
    <property type="entry name" value="Malonyl-Coenzyme A Acyl Carrier Protein, domain 2"/>
    <property type="match status" value="2"/>
</dbReference>
<dbReference type="Gene3D" id="3.10.129.110">
    <property type="entry name" value="Polyketide synthase dehydratase"/>
    <property type="match status" value="1"/>
</dbReference>
<dbReference type="InterPro" id="IPR001227">
    <property type="entry name" value="Ac_transferase_dom_sf"/>
</dbReference>
<dbReference type="InterPro" id="IPR036736">
    <property type="entry name" value="ACP-like_sf"/>
</dbReference>
<dbReference type="InterPro" id="IPR014043">
    <property type="entry name" value="Acyl_transferase_dom"/>
</dbReference>
<dbReference type="InterPro" id="IPR016035">
    <property type="entry name" value="Acyl_Trfase/lysoPLipase"/>
</dbReference>
<dbReference type="InterPro" id="IPR018201">
    <property type="entry name" value="Ketoacyl_synth_AS"/>
</dbReference>
<dbReference type="InterPro" id="IPR014031">
    <property type="entry name" value="Ketoacyl_synth_C"/>
</dbReference>
<dbReference type="InterPro" id="IPR014030">
    <property type="entry name" value="Ketoacyl_synth_N"/>
</dbReference>
<dbReference type="InterPro" id="IPR020841">
    <property type="entry name" value="PKS_Beta-ketoAc_synthase_dom"/>
</dbReference>
<dbReference type="InterPro" id="IPR042104">
    <property type="entry name" value="PKS_dehydratase_sf"/>
</dbReference>
<dbReference type="InterPro" id="IPR049900">
    <property type="entry name" value="PKS_mFAS_DH"/>
</dbReference>
<dbReference type="InterPro" id="IPR050091">
    <property type="entry name" value="PKS_NRPS_Biosynth_Enz"/>
</dbReference>
<dbReference type="InterPro" id="IPR020806">
    <property type="entry name" value="PKS_PP-bd"/>
</dbReference>
<dbReference type="InterPro" id="IPR009081">
    <property type="entry name" value="PP-bd_ACP"/>
</dbReference>
<dbReference type="InterPro" id="IPR030918">
    <property type="entry name" value="PT_fungal_PKS"/>
</dbReference>
<dbReference type="InterPro" id="IPR032088">
    <property type="entry name" value="SAT"/>
</dbReference>
<dbReference type="InterPro" id="IPR016039">
    <property type="entry name" value="Thiolase-like"/>
</dbReference>
<dbReference type="NCBIfam" id="TIGR04532">
    <property type="entry name" value="PT_fungal_PKS"/>
    <property type="match status" value="1"/>
</dbReference>
<dbReference type="PANTHER" id="PTHR43775">
    <property type="entry name" value="FATTY ACID SYNTHASE"/>
    <property type="match status" value="1"/>
</dbReference>
<dbReference type="PANTHER" id="PTHR43775:SF24">
    <property type="entry name" value="NON-REDUCING POLYKETIDE SYNTHASE APTA-RELATED"/>
    <property type="match status" value="1"/>
</dbReference>
<dbReference type="Pfam" id="PF00698">
    <property type="entry name" value="Acyl_transf_1"/>
    <property type="match status" value="1"/>
</dbReference>
<dbReference type="Pfam" id="PF22621">
    <property type="entry name" value="CurL-like_PKS_C"/>
    <property type="match status" value="1"/>
</dbReference>
<dbReference type="Pfam" id="PF00109">
    <property type="entry name" value="ketoacyl-synt"/>
    <property type="match status" value="1"/>
</dbReference>
<dbReference type="Pfam" id="PF02801">
    <property type="entry name" value="Ketoacyl-synt_C"/>
    <property type="match status" value="1"/>
</dbReference>
<dbReference type="Pfam" id="PF00550">
    <property type="entry name" value="PP-binding"/>
    <property type="match status" value="1"/>
</dbReference>
<dbReference type="Pfam" id="PF16073">
    <property type="entry name" value="SAT"/>
    <property type="match status" value="1"/>
</dbReference>
<dbReference type="SMART" id="SM00827">
    <property type="entry name" value="PKS_AT"/>
    <property type="match status" value="1"/>
</dbReference>
<dbReference type="SMART" id="SM00825">
    <property type="entry name" value="PKS_KS"/>
    <property type="match status" value="1"/>
</dbReference>
<dbReference type="SMART" id="SM00823">
    <property type="entry name" value="PKS_PP"/>
    <property type="match status" value="1"/>
</dbReference>
<dbReference type="SUPFAM" id="SSF47336">
    <property type="entry name" value="ACP-like"/>
    <property type="match status" value="1"/>
</dbReference>
<dbReference type="SUPFAM" id="SSF52151">
    <property type="entry name" value="FabD/lysophospholipase-like"/>
    <property type="match status" value="1"/>
</dbReference>
<dbReference type="SUPFAM" id="SSF53901">
    <property type="entry name" value="Thiolase-like"/>
    <property type="match status" value="1"/>
</dbReference>
<dbReference type="PROSITE" id="PS50075">
    <property type="entry name" value="CARRIER"/>
    <property type="match status" value="1"/>
</dbReference>
<dbReference type="PROSITE" id="PS00606">
    <property type="entry name" value="KS3_1"/>
    <property type="match status" value="1"/>
</dbReference>
<dbReference type="PROSITE" id="PS52004">
    <property type="entry name" value="KS3_2"/>
    <property type="match status" value="1"/>
</dbReference>
<dbReference type="PROSITE" id="PS52019">
    <property type="entry name" value="PKS_MFAS_DH"/>
    <property type="match status" value="1"/>
</dbReference>
<keyword id="KW-0012">Acyltransferase</keyword>
<keyword id="KW-0511">Multifunctional enzyme</keyword>
<keyword id="KW-0596">Phosphopantetheine</keyword>
<keyword id="KW-0597">Phosphoprotein</keyword>
<keyword id="KW-1185">Reference proteome</keyword>
<keyword id="KW-0808">Transferase</keyword>
<evidence type="ECO:0000250" key="1">
    <source>
        <dbReference type="UniProtKB" id="A0A0K0MCJ4"/>
    </source>
</evidence>
<evidence type="ECO:0000250" key="2">
    <source>
        <dbReference type="UniProtKB" id="A1D8I9"/>
    </source>
</evidence>
<evidence type="ECO:0000250" key="3">
    <source>
        <dbReference type="UniProtKB" id="F2S6Z9"/>
    </source>
</evidence>
<evidence type="ECO:0000250" key="4">
    <source>
        <dbReference type="UniProtKB" id="Q5B0D0"/>
    </source>
</evidence>
<evidence type="ECO:0000255" key="5"/>
<evidence type="ECO:0000255" key="6">
    <source>
        <dbReference type="PROSITE-ProRule" id="PRU00258"/>
    </source>
</evidence>
<evidence type="ECO:0000255" key="7">
    <source>
        <dbReference type="PROSITE-ProRule" id="PRU01348"/>
    </source>
</evidence>
<evidence type="ECO:0000255" key="8">
    <source>
        <dbReference type="PROSITE-ProRule" id="PRU01363"/>
    </source>
</evidence>
<evidence type="ECO:0000256" key="9">
    <source>
        <dbReference type="SAM" id="MobiDB-lite"/>
    </source>
</evidence>
<evidence type="ECO:0000303" key="10">
    <source>
    </source>
</evidence>
<evidence type="ECO:0000305" key="11">
    <source>
    </source>
</evidence>
<evidence type="ECO:0000305" key="12">
    <source>
    </source>
</evidence>
<feature type="chain" id="PRO_0000437889" description="Non-reducing polyketide synthase nscA">
    <location>
        <begin position="1"/>
        <end position="1796"/>
    </location>
</feature>
<feature type="domain" description="Ketosynthase family 3 (KS3)" evidence="7">
    <location>
        <begin position="392"/>
        <end position="825"/>
    </location>
</feature>
<feature type="domain" description="PKS/mFAS DH" evidence="8">
    <location>
        <begin position="1321"/>
        <end position="1631"/>
    </location>
</feature>
<feature type="domain" description="Carrier" evidence="6">
    <location>
        <begin position="1719"/>
        <end position="1796"/>
    </location>
</feature>
<feature type="region of interest" description="N-terminal acylcarrier protein transacylase domain (SAT)" evidence="5">
    <location>
        <begin position="18"/>
        <end position="256"/>
    </location>
</feature>
<feature type="region of interest" description="Malonyl-CoA:ACP transacylase (MAT) domain" evidence="5">
    <location>
        <begin position="931"/>
        <end position="1251"/>
    </location>
</feature>
<feature type="region of interest" description="Product template (PT) domain" evidence="5">
    <location>
        <begin position="1317"/>
        <end position="1636"/>
    </location>
</feature>
<feature type="region of interest" description="N-terminal hotdog fold" evidence="8">
    <location>
        <begin position="1321"/>
        <end position="1457"/>
    </location>
</feature>
<feature type="region of interest" description="C-terminal hotdog fold" evidence="8">
    <location>
        <begin position="1485"/>
        <end position="1631"/>
    </location>
</feature>
<feature type="region of interest" description="Disordered" evidence="9">
    <location>
        <begin position="1688"/>
        <end position="1720"/>
    </location>
</feature>
<feature type="compositionally biased region" description="Low complexity" evidence="9">
    <location>
        <begin position="1697"/>
        <end position="1708"/>
    </location>
</feature>
<feature type="active site" description="For beta-ketoacyl synthase activity" evidence="7">
    <location>
        <position position="565"/>
    </location>
</feature>
<feature type="active site" description="For beta-ketoacyl synthase activity" evidence="7">
    <location>
        <position position="700"/>
    </location>
</feature>
<feature type="active site" description="For beta-ketoacyl synthase activity" evidence="7">
    <location>
        <position position="743"/>
    </location>
</feature>
<feature type="active site" description="Proton acceptor; for dehydratase activity" evidence="8">
    <location>
        <position position="1353"/>
    </location>
</feature>
<feature type="active site" description="Proton donor; for dehydratase activity" evidence="8">
    <location>
        <position position="1542"/>
    </location>
</feature>
<feature type="modified residue" description="O-(pantetheine 4'-phosphoryl)serine" evidence="6">
    <location>
        <position position="1756"/>
    </location>
</feature>
<reference key="1">
    <citation type="journal article" date="2012" name="MBio">
        <title>Comparative genome analysis of Trichophyton rubrum and related dermatophytes reveals candidate genes involved in infection.</title>
        <authorList>
            <person name="Martinez D.A."/>
            <person name="Oliver B.G."/>
            <person name="Graeser Y."/>
            <person name="Goldberg J.M."/>
            <person name="Li W."/>
            <person name="Martinez-Rossi N.M."/>
            <person name="Monod M."/>
            <person name="Shelest E."/>
            <person name="Barton R.C."/>
            <person name="Birch E."/>
            <person name="Brakhage A.A."/>
            <person name="Chen Z."/>
            <person name="Gurr S.J."/>
            <person name="Heiman D."/>
            <person name="Heitman J."/>
            <person name="Kosti I."/>
            <person name="Rossi A."/>
            <person name="Saif S."/>
            <person name="Samalova M."/>
            <person name="Saunders C.W."/>
            <person name="Shea T."/>
            <person name="Summerbell R.C."/>
            <person name="Xu J."/>
            <person name="Young S."/>
            <person name="Zeng Q."/>
            <person name="Birren B.W."/>
            <person name="Cuomo C.A."/>
            <person name="White T.C."/>
        </authorList>
    </citation>
    <scope>NUCLEOTIDE SEQUENCE [LARGE SCALE GENOMIC DNA]</scope>
    <source>
        <strain>ATCC MYA-4605 / CBS 113480</strain>
    </source>
</reference>
<reference key="2">
    <citation type="journal article" date="2013" name="ACS Synth. Biol.">
        <title>Discovery of cryptic polyketide metabolites from dermatophytes using heterologous expression in Aspergillus nidulans.</title>
        <authorList>
            <person name="Yin W.B."/>
            <person name="Chooi Y.H."/>
            <person name="Smith A.R."/>
            <person name="Cacho R.A."/>
            <person name="Hu Y."/>
            <person name="White T.C."/>
            <person name="Tang Y."/>
        </authorList>
    </citation>
    <scope>FUNCTION</scope>
</reference>
<reference key="3">
    <citation type="journal article" date="2013" name="Org. Lett.">
        <title>Genome mining of a prenylated and immunosuppressive polyketide from pathogenic fungi.</title>
        <authorList>
            <person name="Chooi Y.H."/>
            <person name="Fang J."/>
            <person name="Liu H."/>
            <person name="Filler S.G."/>
            <person name="Wang P."/>
            <person name="Tang Y."/>
        </authorList>
    </citation>
    <scope>FUNCTION</scope>
</reference>
<accession>C5FM57</accession>
<comment type="function">
    <text evidence="2 3 11 12">Non-reducing polyketide synthase; part of the gene cluster that mediates the biosynthesis of neosartoricin B, a prenylated anthracenone that probably exhibits T-cell antiproliferative activity, suggestive of a physiological role as an immunosuppressive agent (PubMed:23368997, PubMed:23758576). The non-reducing polyketide synthase nscA probably synthesizes and cyclizes the decaketide backbone (By similarity). The hydrolase nscB then mediates the product release through hydrolysis followed by spontaneous decarboxylation (By similarity). The prenyltransferase nscD catalyzes the addition of the dimethylallyl group to the aromatic C5 (By similarity). The FAD-dependent monooxygenase nscC is then responsible for the stereospecific hydroxylation at C2 (By similarity). Neosartoricin B can be converted into two additional compounds neosartoricins C and D (By similarity). Neosartoricin C is a spirocyclic compound that is cyclized through the attack of C3 hydroxyl on C14, followed by dehydration (By similarity). On the other hand, neosartoricin D is a further cyclized compound in which attack of C2 on C14 in neosartoricin C results in the formation of the acetal-containing dioxabicyclo-octanone ring (By similarity). Both of these compounds are novel and possibly represent related metabolites of the gene cluster (By similarity).</text>
</comment>
<comment type="cofactor">
    <cofactor evidence="1">
        <name>pantetheine 4'-phosphate</name>
        <dbReference type="ChEBI" id="CHEBI:47942"/>
    </cofactor>
    <text evidence="5">Binds 1 phosphopantetheine covalently.</text>
</comment>
<comment type="pathway">
    <text evidence="4">Secondary metabolite biosynthesis.</text>
</comment>
<comment type="domain">
    <text evidence="4">Multidomain protein; including a starter unit:ACP transacylase (SAT) that selects the starter unit; a ketosynthase (KS) that catalyzes repeated decarboxylative condensation to elongate the polyketide backbone; a malonyl-CoA:ACP transacylase (MAT) that selects and transfers the extender unit malonyl-CoA; a product template (PT) domain that controls the immediate cyclization regioselectivity of the reactive polyketide backbone; and an acyl-carrier protein (ACP) that serves as the tether of the growing and completed polyketide via its phosphopantetheinyl arm (By similarity).</text>
</comment>
<organism>
    <name type="scientific">Arthroderma otae (strain ATCC MYA-4605 / CBS 113480)</name>
    <name type="common">Microsporum canis</name>
    <dbReference type="NCBI Taxonomy" id="554155"/>
    <lineage>
        <taxon>Eukaryota</taxon>
        <taxon>Fungi</taxon>
        <taxon>Dikarya</taxon>
        <taxon>Ascomycota</taxon>
        <taxon>Pezizomycotina</taxon>
        <taxon>Eurotiomycetes</taxon>
        <taxon>Eurotiomycetidae</taxon>
        <taxon>Onygenales</taxon>
        <taxon>Arthrodermataceae</taxon>
        <taxon>Microsporum</taxon>
    </lineage>
</organism>
<proteinExistence type="inferred from homology"/>
<protein>
    <recommendedName>
        <fullName evidence="10">Non-reducing polyketide synthase nscA</fullName>
        <ecNumber evidence="12">2.3.1.-</ecNumber>
    </recommendedName>
    <alternativeName>
        <fullName evidence="10">Conidial yellow pigment biosynthesis polyketide synthase nscA</fullName>
    </alternativeName>
    <alternativeName>
        <fullName evidence="10">Neosartoricin B biosynthesis protein A</fullName>
    </alternativeName>
</protein>
<gene>
    <name evidence="10" type="primary">nscA</name>
    <name type="ORF">MCYG_03598</name>
</gene>
<name>NSCA_ARTOC</name>